<name>GPMB_CITK8</name>
<keyword id="KW-0324">Glycolysis</keyword>
<keyword id="KW-0413">Isomerase</keyword>
<keyword id="KW-1185">Reference proteome</keyword>
<gene>
    <name evidence="1" type="primary">gpmB</name>
    <name type="ordered locus">CKO_03391</name>
</gene>
<organism>
    <name type="scientific">Citrobacter koseri (strain ATCC BAA-895 / CDC 4225-83 / SGSC4696)</name>
    <dbReference type="NCBI Taxonomy" id="290338"/>
    <lineage>
        <taxon>Bacteria</taxon>
        <taxon>Pseudomonadati</taxon>
        <taxon>Pseudomonadota</taxon>
        <taxon>Gammaproteobacteria</taxon>
        <taxon>Enterobacterales</taxon>
        <taxon>Enterobacteriaceae</taxon>
        <taxon>Citrobacter</taxon>
    </lineage>
</organism>
<protein>
    <recommendedName>
        <fullName evidence="1">Probable phosphoglycerate mutase GpmB</fullName>
        <ecNumber evidence="1">5.4.2.-</ecNumber>
    </recommendedName>
    <alternativeName>
        <fullName evidence="1">PGAM</fullName>
    </alternativeName>
    <alternativeName>
        <fullName evidence="1">Phosphoglyceromutase</fullName>
    </alternativeName>
</protein>
<proteinExistence type="inferred from homology"/>
<dbReference type="EC" id="5.4.2.-" evidence="1"/>
<dbReference type="EMBL" id="CP000822">
    <property type="protein sequence ID" value="ABV14474.1"/>
    <property type="molecule type" value="Genomic_DNA"/>
</dbReference>
<dbReference type="RefSeq" id="WP_012134175.1">
    <property type="nucleotide sequence ID" value="NC_009792.1"/>
</dbReference>
<dbReference type="SMR" id="A8ALW1"/>
<dbReference type="STRING" id="290338.CKO_03391"/>
<dbReference type="GeneID" id="45137148"/>
<dbReference type="KEGG" id="cko:CKO_03391"/>
<dbReference type="HOGENOM" id="CLU_033323_9_5_6"/>
<dbReference type="OrthoDB" id="9783269at2"/>
<dbReference type="UniPathway" id="UPA00109">
    <property type="reaction ID" value="UER00186"/>
</dbReference>
<dbReference type="Proteomes" id="UP000008148">
    <property type="component" value="Chromosome"/>
</dbReference>
<dbReference type="GO" id="GO:0005737">
    <property type="term" value="C:cytoplasm"/>
    <property type="evidence" value="ECO:0007669"/>
    <property type="project" value="TreeGrafter"/>
</dbReference>
<dbReference type="GO" id="GO:0016791">
    <property type="term" value="F:phosphatase activity"/>
    <property type="evidence" value="ECO:0007669"/>
    <property type="project" value="TreeGrafter"/>
</dbReference>
<dbReference type="GO" id="GO:0004619">
    <property type="term" value="F:phosphoglycerate mutase activity"/>
    <property type="evidence" value="ECO:0007669"/>
    <property type="project" value="UniProtKB-UniRule"/>
</dbReference>
<dbReference type="GO" id="GO:0006096">
    <property type="term" value="P:glycolytic process"/>
    <property type="evidence" value="ECO:0007669"/>
    <property type="project" value="UniProtKB-UniRule"/>
</dbReference>
<dbReference type="CDD" id="cd07067">
    <property type="entry name" value="HP_PGM_like"/>
    <property type="match status" value="1"/>
</dbReference>
<dbReference type="Gene3D" id="3.40.50.1240">
    <property type="entry name" value="Phosphoglycerate mutase-like"/>
    <property type="match status" value="1"/>
</dbReference>
<dbReference type="HAMAP" id="MF_01040">
    <property type="entry name" value="PGAM_GpmB"/>
    <property type="match status" value="1"/>
</dbReference>
<dbReference type="InterPro" id="IPR013078">
    <property type="entry name" value="His_Pase_superF_clade-1"/>
</dbReference>
<dbReference type="InterPro" id="IPR029033">
    <property type="entry name" value="His_PPase_superfam"/>
</dbReference>
<dbReference type="InterPro" id="IPR001345">
    <property type="entry name" value="PG/BPGM_mutase_AS"/>
</dbReference>
<dbReference type="InterPro" id="IPR050275">
    <property type="entry name" value="PGM_Phosphatase"/>
</dbReference>
<dbReference type="InterPro" id="IPR023086">
    <property type="entry name" value="Phosphoglycerate_mutase_GpmB"/>
</dbReference>
<dbReference type="NCBIfam" id="NF002901">
    <property type="entry name" value="PRK03482.1"/>
    <property type="match status" value="1"/>
</dbReference>
<dbReference type="PANTHER" id="PTHR48100">
    <property type="entry name" value="BROAD-SPECIFICITY PHOSPHATASE YOR283W-RELATED"/>
    <property type="match status" value="1"/>
</dbReference>
<dbReference type="PANTHER" id="PTHR48100:SF1">
    <property type="entry name" value="HISTIDINE PHOSPHATASE FAMILY PROTEIN-RELATED"/>
    <property type="match status" value="1"/>
</dbReference>
<dbReference type="Pfam" id="PF00300">
    <property type="entry name" value="His_Phos_1"/>
    <property type="match status" value="1"/>
</dbReference>
<dbReference type="SMART" id="SM00855">
    <property type="entry name" value="PGAM"/>
    <property type="match status" value="1"/>
</dbReference>
<dbReference type="SUPFAM" id="SSF53254">
    <property type="entry name" value="Phosphoglycerate mutase-like"/>
    <property type="match status" value="1"/>
</dbReference>
<dbReference type="PROSITE" id="PS00175">
    <property type="entry name" value="PG_MUTASE"/>
    <property type="match status" value="1"/>
</dbReference>
<accession>A8ALW1</accession>
<evidence type="ECO:0000255" key="1">
    <source>
        <dbReference type="HAMAP-Rule" id="MF_01040"/>
    </source>
</evidence>
<comment type="catalytic activity">
    <reaction evidence="1">
        <text>(2R)-2-phosphoglycerate = (2R)-3-phosphoglycerate</text>
        <dbReference type="Rhea" id="RHEA:15901"/>
        <dbReference type="ChEBI" id="CHEBI:58272"/>
        <dbReference type="ChEBI" id="CHEBI:58289"/>
    </reaction>
</comment>
<comment type="pathway">
    <text evidence="1">Carbohydrate degradation; glycolysis; pyruvate from D-glyceraldehyde 3-phosphate: step 3/5.</text>
</comment>
<comment type="similarity">
    <text evidence="1">Belongs to the phosphoglycerate mutase family. GpmB subfamily.</text>
</comment>
<feature type="chain" id="PRO_1000064119" description="Probable phosphoglycerate mutase GpmB">
    <location>
        <begin position="1"/>
        <end position="215"/>
    </location>
</feature>
<feature type="active site" description="Tele-phosphohistidine intermediate" evidence="1">
    <location>
        <position position="9"/>
    </location>
</feature>
<feature type="active site" description="Proton donor/acceptor" evidence="1">
    <location>
        <position position="82"/>
    </location>
</feature>
<feature type="binding site" evidence="1">
    <location>
        <begin position="8"/>
        <end position="15"/>
    </location>
    <ligand>
        <name>substrate</name>
    </ligand>
</feature>
<feature type="binding site" evidence="1">
    <location>
        <begin position="21"/>
        <end position="22"/>
    </location>
    <ligand>
        <name>substrate</name>
    </ligand>
</feature>
<feature type="binding site" evidence="1">
    <location>
        <position position="58"/>
    </location>
    <ligand>
        <name>substrate</name>
    </ligand>
</feature>
<feature type="binding site" evidence="1">
    <location>
        <position position="60"/>
    </location>
    <ligand>
        <name>substrate</name>
    </ligand>
</feature>
<feature type="binding site" evidence="1">
    <location>
        <begin position="82"/>
        <end position="85"/>
    </location>
    <ligand>
        <name>substrate</name>
    </ligand>
</feature>
<feature type="binding site" evidence="1">
    <location>
        <begin position="104"/>
        <end position="105"/>
    </location>
    <ligand>
        <name>substrate</name>
    </ligand>
</feature>
<feature type="binding site" evidence="1">
    <location>
        <begin position="151"/>
        <end position="152"/>
    </location>
    <ligand>
        <name>substrate</name>
    </ligand>
</feature>
<feature type="site" description="Transition state stabilizer" evidence="1">
    <location>
        <position position="150"/>
    </location>
</feature>
<reference key="1">
    <citation type="submission" date="2007-08" db="EMBL/GenBank/DDBJ databases">
        <authorList>
            <consortium name="The Citrobacter koseri Genome Sequencing Project"/>
            <person name="McClelland M."/>
            <person name="Sanderson E.K."/>
            <person name="Porwollik S."/>
            <person name="Spieth J."/>
            <person name="Clifton W.S."/>
            <person name="Latreille P."/>
            <person name="Courtney L."/>
            <person name="Wang C."/>
            <person name="Pepin K."/>
            <person name="Bhonagiri V."/>
            <person name="Nash W."/>
            <person name="Johnson M."/>
            <person name="Thiruvilangam P."/>
            <person name="Wilson R."/>
        </authorList>
    </citation>
    <scope>NUCLEOTIDE SEQUENCE [LARGE SCALE GENOMIC DNA]</scope>
    <source>
        <strain>ATCC BAA-895 / CDC 4225-83 / SGSC4696</strain>
    </source>
</reference>
<sequence length="215" mass="23947">MLQVYLVRHGETQWNAERRIQGQSDSPLTAKGEQQAMQVGERARTLGITHIVSSDLGRTRRTAEIIAQACGCDITFDARLRELDMGVLEKRHIDTLTEEEENWRRQLVNGTVDGRIPDGESMQELSDRVNAALASCLELPQGSRPLLVSHGIALGCLVSTILGLPAWAERRLRLRNCSISRVDYQESLWLAPGWVVETAGDVSHLDAPALDELQR</sequence>